<keyword id="KW-0131">Cell cycle</keyword>
<keyword id="KW-0132">Cell division</keyword>
<keyword id="KW-0143">Chaperone</keyword>
<keyword id="KW-0963">Cytoplasm</keyword>
<keyword id="KW-0413">Isomerase</keyword>
<keyword id="KW-0697">Rotamase</keyword>
<proteinExistence type="inferred from homology"/>
<protein>
    <recommendedName>
        <fullName evidence="1">Trigger factor</fullName>
        <shortName evidence="1">TF</shortName>
        <ecNumber evidence="1">5.2.1.8</ecNumber>
    </recommendedName>
    <alternativeName>
        <fullName evidence="1">PPIase</fullName>
    </alternativeName>
</protein>
<evidence type="ECO:0000255" key="1">
    <source>
        <dbReference type="HAMAP-Rule" id="MF_00303"/>
    </source>
</evidence>
<accession>A8FJZ4</accession>
<organism>
    <name type="scientific">Campylobacter jejuni subsp. jejuni serotype O:6 (strain 81116 / NCTC 11828)</name>
    <dbReference type="NCBI Taxonomy" id="407148"/>
    <lineage>
        <taxon>Bacteria</taxon>
        <taxon>Pseudomonadati</taxon>
        <taxon>Campylobacterota</taxon>
        <taxon>Epsilonproteobacteria</taxon>
        <taxon>Campylobacterales</taxon>
        <taxon>Campylobacteraceae</taxon>
        <taxon>Campylobacter</taxon>
    </lineage>
</organism>
<sequence>MEVKAKQLDSVNATASVKIPSGMIKSEVENLAKKASKSVKMDGFRPGKVPVSAVLKRYERELTQDAEQNLFKSAVNSALQELKKESKELVGEPYFEKFDRKDGEIIAELILSFKPEIKLDGYEKLIPEYQTPKVSKKEIDEKKDELLKRFATPEAIKTKRVLKEGDFAKFDFEGFVDDKAFEGGKAENYVLEIGSKQFIPGFEDGMVGMKIGEEKDIKVTFPKEYGAAHLAGKDAVFKVKLHEIQELKIPELDDEMLKKLLPGEEKASVEVLDEKLKEQIKNEKLFKLVNDELKGKFADALIEKYNFDLPKGIVEQETDMQMRAAFNTFSEKEIEELKASKEKYQEKRDSFKEEAQKSVKLTFIIDELAKLRKIEVNDQELIQAIYFEAYRYGMNPKEHLENYKKQGALPAVKMALIEEKLFNDIFMPKTEKSEKASKKEKEDK</sequence>
<reference key="1">
    <citation type="journal article" date="2007" name="J. Bacteriol.">
        <title>The complete genome sequence of Campylobacter jejuni strain 81116 (NCTC11828).</title>
        <authorList>
            <person name="Pearson B.M."/>
            <person name="Gaskin D.J.H."/>
            <person name="Segers R.P.A.M."/>
            <person name="Wells J.M."/>
            <person name="Nuijten P.J.M."/>
            <person name="van Vliet A.H.M."/>
        </authorList>
    </citation>
    <scope>NUCLEOTIDE SEQUENCE [LARGE SCALE GENOMIC DNA]</scope>
    <source>
        <strain>81116 / NCTC 11828</strain>
    </source>
</reference>
<name>TIG_CAMJ8</name>
<gene>
    <name evidence="1" type="primary">tig</name>
    <name type="ordered locus">C8J_0182</name>
</gene>
<dbReference type="EC" id="5.2.1.8" evidence="1"/>
<dbReference type="EMBL" id="CP000814">
    <property type="protein sequence ID" value="ABV51781.1"/>
    <property type="molecule type" value="Genomic_DNA"/>
</dbReference>
<dbReference type="RefSeq" id="WP_002866350.1">
    <property type="nucleotide sequence ID" value="NC_009839.1"/>
</dbReference>
<dbReference type="SMR" id="A8FJZ4"/>
<dbReference type="KEGG" id="cju:C8J_0182"/>
<dbReference type="HOGENOM" id="CLU_033058_2_2_7"/>
<dbReference type="GO" id="GO:0005737">
    <property type="term" value="C:cytoplasm"/>
    <property type="evidence" value="ECO:0007669"/>
    <property type="project" value="UniProtKB-SubCell"/>
</dbReference>
<dbReference type="GO" id="GO:0003755">
    <property type="term" value="F:peptidyl-prolyl cis-trans isomerase activity"/>
    <property type="evidence" value="ECO:0007669"/>
    <property type="project" value="UniProtKB-UniRule"/>
</dbReference>
<dbReference type="GO" id="GO:0051301">
    <property type="term" value="P:cell division"/>
    <property type="evidence" value="ECO:0007669"/>
    <property type="project" value="UniProtKB-KW"/>
</dbReference>
<dbReference type="GO" id="GO:0006457">
    <property type="term" value="P:protein folding"/>
    <property type="evidence" value="ECO:0007669"/>
    <property type="project" value="UniProtKB-UniRule"/>
</dbReference>
<dbReference type="GO" id="GO:0015031">
    <property type="term" value="P:protein transport"/>
    <property type="evidence" value="ECO:0007669"/>
    <property type="project" value="UniProtKB-UniRule"/>
</dbReference>
<dbReference type="FunFam" id="3.10.50.40:FF:000001">
    <property type="entry name" value="Trigger factor"/>
    <property type="match status" value="1"/>
</dbReference>
<dbReference type="Gene3D" id="3.10.50.40">
    <property type="match status" value="1"/>
</dbReference>
<dbReference type="Gene3D" id="3.30.70.1050">
    <property type="entry name" value="Trigger factor ribosome-binding domain"/>
    <property type="match status" value="1"/>
</dbReference>
<dbReference type="Gene3D" id="1.10.3120.10">
    <property type="entry name" value="Trigger factor, C-terminal domain"/>
    <property type="match status" value="1"/>
</dbReference>
<dbReference type="HAMAP" id="MF_00303">
    <property type="entry name" value="Trigger_factor_Tig"/>
    <property type="match status" value="1"/>
</dbReference>
<dbReference type="InterPro" id="IPR046357">
    <property type="entry name" value="PPIase_dom_sf"/>
</dbReference>
<dbReference type="InterPro" id="IPR001179">
    <property type="entry name" value="PPIase_FKBP_dom"/>
</dbReference>
<dbReference type="InterPro" id="IPR005215">
    <property type="entry name" value="Trig_fac"/>
</dbReference>
<dbReference type="InterPro" id="IPR008880">
    <property type="entry name" value="Trigger_fac_C"/>
</dbReference>
<dbReference type="InterPro" id="IPR037041">
    <property type="entry name" value="Trigger_fac_C_sf"/>
</dbReference>
<dbReference type="InterPro" id="IPR008881">
    <property type="entry name" value="Trigger_fac_ribosome-bd_bac"/>
</dbReference>
<dbReference type="InterPro" id="IPR036611">
    <property type="entry name" value="Trigger_fac_ribosome-bd_sf"/>
</dbReference>
<dbReference type="InterPro" id="IPR027304">
    <property type="entry name" value="Trigger_fact/SurA_dom_sf"/>
</dbReference>
<dbReference type="NCBIfam" id="TIGR00115">
    <property type="entry name" value="tig"/>
    <property type="match status" value="1"/>
</dbReference>
<dbReference type="Pfam" id="PF00254">
    <property type="entry name" value="FKBP_C"/>
    <property type="match status" value="1"/>
</dbReference>
<dbReference type="Pfam" id="PF05698">
    <property type="entry name" value="Trigger_C"/>
    <property type="match status" value="1"/>
</dbReference>
<dbReference type="Pfam" id="PF05697">
    <property type="entry name" value="Trigger_N"/>
    <property type="match status" value="1"/>
</dbReference>
<dbReference type="PIRSF" id="PIRSF003095">
    <property type="entry name" value="Trigger_factor"/>
    <property type="match status" value="1"/>
</dbReference>
<dbReference type="SUPFAM" id="SSF54534">
    <property type="entry name" value="FKBP-like"/>
    <property type="match status" value="1"/>
</dbReference>
<dbReference type="SUPFAM" id="SSF109998">
    <property type="entry name" value="Triger factor/SurA peptide-binding domain-like"/>
    <property type="match status" value="1"/>
</dbReference>
<dbReference type="SUPFAM" id="SSF102735">
    <property type="entry name" value="Trigger factor ribosome-binding domain"/>
    <property type="match status" value="1"/>
</dbReference>
<dbReference type="PROSITE" id="PS50059">
    <property type="entry name" value="FKBP_PPIASE"/>
    <property type="match status" value="1"/>
</dbReference>
<comment type="function">
    <text evidence="1">Involved in protein export. Acts as a chaperone by maintaining the newly synthesized protein in an open conformation. Functions as a peptidyl-prolyl cis-trans isomerase.</text>
</comment>
<comment type="catalytic activity">
    <reaction evidence="1">
        <text>[protein]-peptidylproline (omega=180) = [protein]-peptidylproline (omega=0)</text>
        <dbReference type="Rhea" id="RHEA:16237"/>
        <dbReference type="Rhea" id="RHEA-COMP:10747"/>
        <dbReference type="Rhea" id="RHEA-COMP:10748"/>
        <dbReference type="ChEBI" id="CHEBI:83833"/>
        <dbReference type="ChEBI" id="CHEBI:83834"/>
        <dbReference type="EC" id="5.2.1.8"/>
    </reaction>
</comment>
<comment type="subcellular location">
    <subcellularLocation>
        <location>Cytoplasm</location>
    </subcellularLocation>
    <text evidence="1">About half TF is bound to the ribosome near the polypeptide exit tunnel while the other half is free in the cytoplasm.</text>
</comment>
<comment type="domain">
    <text evidence="1">Consists of 3 domains; the N-terminus binds the ribosome, the middle domain has PPIase activity, while the C-terminus has intrinsic chaperone activity on its own.</text>
</comment>
<comment type="similarity">
    <text evidence="1">Belongs to the FKBP-type PPIase family. Tig subfamily.</text>
</comment>
<feature type="chain" id="PRO_1000071985" description="Trigger factor">
    <location>
        <begin position="1"/>
        <end position="444"/>
    </location>
</feature>
<feature type="domain" description="PPIase FKBP-type" evidence="1">
    <location>
        <begin position="165"/>
        <end position="250"/>
    </location>
</feature>